<organismHost>
    <name type="scientific">Trifolium</name>
    <dbReference type="NCBI Taxonomy" id="3898"/>
</organismHost>
<feature type="chain" id="PRO_0000222594" description="Movement protein TGB2">
    <location>
        <begin position="1"/>
        <end position="117"/>
    </location>
</feature>
<feature type="topological domain" description="Cytoplasmic" evidence="1">
    <location>
        <begin position="1"/>
        <end position="11"/>
    </location>
</feature>
<feature type="transmembrane region" description="Helical" evidence="2">
    <location>
        <begin position="12"/>
        <end position="32"/>
    </location>
</feature>
<feature type="topological domain" description="Lumenal" evidence="1">
    <location>
        <begin position="33"/>
        <end position="78"/>
    </location>
</feature>
<feature type="transmembrane region" description="Helical" evidence="2">
    <location>
        <begin position="79"/>
        <end position="99"/>
    </location>
</feature>
<feature type="topological domain" description="Cytoplasmic" evidence="1">
    <location>
        <begin position="100"/>
        <end position="117"/>
    </location>
</feature>
<comment type="function">
    <text evidence="1">Plays a role in viral cell-to-cell propagation, by facilitating genome transport to neighboring plant cells through plasmosdesmata,.</text>
</comment>
<comment type="subcellular location">
    <subcellularLocation>
        <location evidence="1">Host endoplasmic reticulum membrane</location>
    </subcellularLocation>
</comment>
<comment type="miscellaneous">
    <text>TGBp1, TGBp2 and TGBp3 seem to act together for cell-to-cell propagation. TGBp1 is the main movement protein that physically cross the plasmodesma with the viral genome. TGBp2 and TGBp3 would facilitate TGBp1 function.</text>
</comment>
<comment type="similarity">
    <text evidence="3">Belongs to the Tymovirales TGBp2 protein family.</text>
</comment>
<protein>
    <recommendedName>
        <fullName>Movement protein TGB2</fullName>
    </recommendedName>
    <alternativeName>
        <fullName>13 kDa protein</fullName>
    </alternativeName>
    <alternativeName>
        <fullName>Triple gene block 2 protein</fullName>
        <shortName>TGBp2</shortName>
    </alternativeName>
</protein>
<gene>
    <name type="ORF">ORF3</name>
</gene>
<sequence>MPLIPPPNPQKTYQIAVLALGLVLLLAFVLISDHSPKVGDHLHNLPFGGEYKDGTKTIKYFQRPNQHSLSKTLAKSHNTTIFLIILGLIGTLHGLHYFSNNRRISSSLHCVLCQNKH</sequence>
<dbReference type="EMBL" id="X16636">
    <property type="protein sequence ID" value="CAA34630.1"/>
    <property type="molecule type" value="Genomic_RNA"/>
</dbReference>
<dbReference type="PIR" id="S35112">
    <property type="entry name" value="S35112"/>
</dbReference>
<dbReference type="Proteomes" id="UP000007628">
    <property type="component" value="Genome"/>
</dbReference>
<dbReference type="GO" id="GO:0044167">
    <property type="term" value="C:host cell endoplasmic reticulum membrane"/>
    <property type="evidence" value="ECO:0007669"/>
    <property type="project" value="UniProtKB-SubCell"/>
</dbReference>
<dbReference type="GO" id="GO:0016020">
    <property type="term" value="C:membrane"/>
    <property type="evidence" value="ECO:0007669"/>
    <property type="project" value="UniProtKB-KW"/>
</dbReference>
<dbReference type="GO" id="GO:0046740">
    <property type="term" value="P:transport of virus in host, cell to cell"/>
    <property type="evidence" value="ECO:0007669"/>
    <property type="project" value="UniProtKB-KW"/>
</dbReference>
<dbReference type="InterPro" id="IPR001896">
    <property type="entry name" value="Plant_vir_prot"/>
</dbReference>
<dbReference type="Pfam" id="PF01307">
    <property type="entry name" value="Plant_vir_prot"/>
    <property type="match status" value="1"/>
</dbReference>
<evidence type="ECO:0000250" key="1"/>
<evidence type="ECO:0000255" key="2"/>
<evidence type="ECO:0000305" key="3"/>
<name>TGB2_WCMVO</name>
<accession>P15404</accession>
<proteinExistence type="inferred from homology"/>
<keyword id="KW-1038">Host endoplasmic reticulum</keyword>
<keyword id="KW-1043">Host membrane</keyword>
<keyword id="KW-0472">Membrane</keyword>
<keyword id="KW-0812">Transmembrane</keyword>
<keyword id="KW-1133">Transmembrane helix</keyword>
<keyword id="KW-0813">Transport</keyword>
<keyword id="KW-0916">Viral movement protein</keyword>
<organism>
    <name type="scientific">White clover mosaic virus (strain O)</name>
    <name type="common">WCMV</name>
    <dbReference type="NCBI Taxonomy" id="12190"/>
    <lineage>
        <taxon>Viruses</taxon>
        <taxon>Riboviria</taxon>
        <taxon>Orthornavirae</taxon>
        <taxon>Kitrinoviricota</taxon>
        <taxon>Alsuviricetes</taxon>
        <taxon>Tymovirales</taxon>
        <taxon>Alphaflexiviridae</taxon>
        <taxon>Potexvirus</taxon>
        <taxon>White clover mosaic virus</taxon>
    </lineage>
</organism>
<reference key="1">
    <citation type="journal article" date="1990" name="Virology">
        <title>Infectious transcripts and nucleotide sequence of cloned cDNA of the potexvirus white clover mosaic virus.</title>
        <authorList>
            <person name="Beck D.L."/>
            <person name="Forster R.L.S."/>
            <person name="Bevan M.W."/>
            <person name="Boxen K.A."/>
            <person name="Lowe S.C."/>
            <person name="Gardner R.C."/>
        </authorList>
    </citation>
    <scope>NUCLEOTIDE SEQUENCE [GENOMIC RNA]</scope>
</reference>
<reference key="2">
    <citation type="journal article" date="2005" name="Mol. Plant Microbe Interact.">
        <title>A new cell-to-cell transport model for Potexviruses.</title>
        <authorList>
            <person name="Verchot-Lubicz J."/>
        </authorList>
    </citation>
    <scope>REVIEW</scope>
</reference>